<dbReference type="EC" id="6.1.1.21" evidence="1"/>
<dbReference type="EMBL" id="AE015929">
    <property type="protein sequence ID" value="AAO04911.1"/>
    <property type="molecule type" value="Genomic_DNA"/>
</dbReference>
<dbReference type="RefSeq" id="NP_764867.1">
    <property type="nucleotide sequence ID" value="NC_004461.1"/>
</dbReference>
<dbReference type="RefSeq" id="WP_001830876.1">
    <property type="nucleotide sequence ID" value="NZ_WBME01000059.1"/>
</dbReference>
<dbReference type="SMR" id="Q8CS98"/>
<dbReference type="GeneID" id="50018571"/>
<dbReference type="KEGG" id="sep:SE_1312"/>
<dbReference type="PATRIC" id="fig|176280.10.peg.1281"/>
<dbReference type="eggNOG" id="COG0124">
    <property type="taxonomic scope" value="Bacteria"/>
</dbReference>
<dbReference type="HOGENOM" id="CLU_025113_1_1_9"/>
<dbReference type="OrthoDB" id="9800814at2"/>
<dbReference type="Proteomes" id="UP000001411">
    <property type="component" value="Chromosome"/>
</dbReference>
<dbReference type="GO" id="GO:0005737">
    <property type="term" value="C:cytoplasm"/>
    <property type="evidence" value="ECO:0007669"/>
    <property type="project" value="UniProtKB-SubCell"/>
</dbReference>
<dbReference type="GO" id="GO:0005524">
    <property type="term" value="F:ATP binding"/>
    <property type="evidence" value="ECO:0007669"/>
    <property type="project" value="UniProtKB-UniRule"/>
</dbReference>
<dbReference type="GO" id="GO:0140096">
    <property type="term" value="F:catalytic activity, acting on a protein"/>
    <property type="evidence" value="ECO:0007669"/>
    <property type="project" value="UniProtKB-ARBA"/>
</dbReference>
<dbReference type="GO" id="GO:0004821">
    <property type="term" value="F:histidine-tRNA ligase activity"/>
    <property type="evidence" value="ECO:0007669"/>
    <property type="project" value="UniProtKB-UniRule"/>
</dbReference>
<dbReference type="GO" id="GO:0016740">
    <property type="term" value="F:transferase activity"/>
    <property type="evidence" value="ECO:0007669"/>
    <property type="project" value="UniProtKB-ARBA"/>
</dbReference>
<dbReference type="GO" id="GO:0006427">
    <property type="term" value="P:histidyl-tRNA aminoacylation"/>
    <property type="evidence" value="ECO:0007669"/>
    <property type="project" value="UniProtKB-UniRule"/>
</dbReference>
<dbReference type="CDD" id="cd00773">
    <property type="entry name" value="HisRS-like_core"/>
    <property type="match status" value="1"/>
</dbReference>
<dbReference type="CDD" id="cd00859">
    <property type="entry name" value="HisRS_anticodon"/>
    <property type="match status" value="1"/>
</dbReference>
<dbReference type="FunFam" id="3.30.930.10:FF:000005">
    <property type="entry name" value="Histidine--tRNA ligase"/>
    <property type="match status" value="1"/>
</dbReference>
<dbReference type="Gene3D" id="3.40.50.800">
    <property type="entry name" value="Anticodon-binding domain"/>
    <property type="match status" value="1"/>
</dbReference>
<dbReference type="Gene3D" id="3.30.930.10">
    <property type="entry name" value="Bira Bifunctional Protein, Domain 2"/>
    <property type="match status" value="1"/>
</dbReference>
<dbReference type="HAMAP" id="MF_00127">
    <property type="entry name" value="His_tRNA_synth"/>
    <property type="match status" value="1"/>
</dbReference>
<dbReference type="InterPro" id="IPR006195">
    <property type="entry name" value="aa-tRNA-synth_II"/>
</dbReference>
<dbReference type="InterPro" id="IPR045864">
    <property type="entry name" value="aa-tRNA-synth_II/BPL/LPL"/>
</dbReference>
<dbReference type="InterPro" id="IPR004154">
    <property type="entry name" value="Anticodon-bd"/>
</dbReference>
<dbReference type="InterPro" id="IPR036621">
    <property type="entry name" value="Anticodon-bd_dom_sf"/>
</dbReference>
<dbReference type="InterPro" id="IPR015807">
    <property type="entry name" value="His-tRNA-ligase"/>
</dbReference>
<dbReference type="InterPro" id="IPR041715">
    <property type="entry name" value="HisRS-like_core"/>
</dbReference>
<dbReference type="InterPro" id="IPR004516">
    <property type="entry name" value="HisRS/HisZ"/>
</dbReference>
<dbReference type="InterPro" id="IPR033656">
    <property type="entry name" value="HisRS_anticodon"/>
</dbReference>
<dbReference type="NCBIfam" id="TIGR00442">
    <property type="entry name" value="hisS"/>
    <property type="match status" value="1"/>
</dbReference>
<dbReference type="PANTHER" id="PTHR43707:SF1">
    <property type="entry name" value="HISTIDINE--TRNA LIGASE, MITOCHONDRIAL-RELATED"/>
    <property type="match status" value="1"/>
</dbReference>
<dbReference type="PANTHER" id="PTHR43707">
    <property type="entry name" value="HISTIDYL-TRNA SYNTHETASE"/>
    <property type="match status" value="1"/>
</dbReference>
<dbReference type="Pfam" id="PF03129">
    <property type="entry name" value="HGTP_anticodon"/>
    <property type="match status" value="1"/>
</dbReference>
<dbReference type="Pfam" id="PF13393">
    <property type="entry name" value="tRNA-synt_His"/>
    <property type="match status" value="1"/>
</dbReference>
<dbReference type="PIRSF" id="PIRSF001549">
    <property type="entry name" value="His-tRNA_synth"/>
    <property type="match status" value="1"/>
</dbReference>
<dbReference type="SUPFAM" id="SSF52954">
    <property type="entry name" value="Class II aaRS ABD-related"/>
    <property type="match status" value="1"/>
</dbReference>
<dbReference type="SUPFAM" id="SSF55681">
    <property type="entry name" value="Class II aaRS and biotin synthetases"/>
    <property type="match status" value="1"/>
</dbReference>
<dbReference type="PROSITE" id="PS50862">
    <property type="entry name" value="AA_TRNA_LIGASE_II"/>
    <property type="match status" value="1"/>
</dbReference>
<feature type="chain" id="PRO_0000136256" description="Histidine--tRNA ligase">
    <location>
        <begin position="1"/>
        <end position="424"/>
    </location>
</feature>
<keyword id="KW-0030">Aminoacyl-tRNA synthetase</keyword>
<keyword id="KW-0067">ATP-binding</keyword>
<keyword id="KW-0963">Cytoplasm</keyword>
<keyword id="KW-0436">Ligase</keyword>
<keyword id="KW-0547">Nucleotide-binding</keyword>
<keyword id="KW-0648">Protein biosynthesis</keyword>
<protein>
    <recommendedName>
        <fullName evidence="1">Histidine--tRNA ligase</fullName>
        <ecNumber evidence="1">6.1.1.21</ecNumber>
    </recommendedName>
    <alternativeName>
        <fullName evidence="1">Histidyl-tRNA synthetase</fullName>
        <shortName evidence="1">HisRS</shortName>
    </alternativeName>
</protein>
<gene>
    <name evidence="1" type="primary">hisS</name>
    <name type="ordered locus">SE_1312</name>
</gene>
<accession>Q8CS98</accession>
<name>SYH_STAES</name>
<reference key="1">
    <citation type="journal article" date="2003" name="Mol. Microbiol.">
        <title>Genome-based analysis of virulence genes in a non-biofilm-forming Staphylococcus epidermidis strain (ATCC 12228).</title>
        <authorList>
            <person name="Zhang Y.-Q."/>
            <person name="Ren S.-X."/>
            <person name="Li H.-L."/>
            <person name="Wang Y.-X."/>
            <person name="Fu G."/>
            <person name="Yang J."/>
            <person name="Qin Z.-Q."/>
            <person name="Miao Y.-G."/>
            <person name="Wang W.-Y."/>
            <person name="Chen R.-S."/>
            <person name="Shen Y."/>
            <person name="Chen Z."/>
            <person name="Yuan Z.-H."/>
            <person name="Zhao G.-P."/>
            <person name="Qu D."/>
            <person name="Danchin A."/>
            <person name="Wen Y.-M."/>
        </authorList>
    </citation>
    <scope>NUCLEOTIDE SEQUENCE [LARGE SCALE GENOMIC DNA]</scope>
    <source>
        <strain>ATCC 12228 / FDA PCI 1200</strain>
    </source>
</reference>
<proteinExistence type="inferred from homology"/>
<comment type="catalytic activity">
    <reaction evidence="1">
        <text>tRNA(His) + L-histidine + ATP = L-histidyl-tRNA(His) + AMP + diphosphate + H(+)</text>
        <dbReference type="Rhea" id="RHEA:17313"/>
        <dbReference type="Rhea" id="RHEA-COMP:9665"/>
        <dbReference type="Rhea" id="RHEA-COMP:9689"/>
        <dbReference type="ChEBI" id="CHEBI:15378"/>
        <dbReference type="ChEBI" id="CHEBI:30616"/>
        <dbReference type="ChEBI" id="CHEBI:33019"/>
        <dbReference type="ChEBI" id="CHEBI:57595"/>
        <dbReference type="ChEBI" id="CHEBI:78442"/>
        <dbReference type="ChEBI" id="CHEBI:78527"/>
        <dbReference type="ChEBI" id="CHEBI:456215"/>
        <dbReference type="EC" id="6.1.1.21"/>
    </reaction>
</comment>
<comment type="subunit">
    <text evidence="1">Homodimer.</text>
</comment>
<comment type="subcellular location">
    <subcellularLocation>
        <location evidence="1">Cytoplasm</location>
    </subcellularLocation>
</comment>
<comment type="similarity">
    <text evidence="1">Belongs to the class-II aminoacyl-tRNA synthetase family.</text>
</comment>
<sequence>MIKMPRGTQDILPQDSAKWRYIENRLHTLMELYNYKEIRTPIFESTELFARGVGDSTDVVQKEMYTFKDKGDRSLTLRPEGTAAVVRSYIEHKMQGEPNQPIKLYYNGPMFRYERKQKGRYRQFNQFGVEAIGAENPSIDAEILAMVMHIYESFGLKHLKLVINSIGDSESRKEYNEALVKHFEPVIDTFCSDCQSRLHTNPMRILDCKIDRDKEAVKNAPRITDYLNNDSKSYYEQVKLHLDNLNISYVEDPNLVRGLDYYTHTAFELMIDNPEYDGAITTLCGGGRYNGLLQLLDGPDETGIGFALSIERLLMALDEEGISLDVSEDFDLFVVTMGEDADRYAVKLINDLRRNGIKVDKDYLNRKIKGQMKQADRLNAKYTVVIGDQELENNEIGVKNMISGESENVQLDELVNYFKSRKEV</sequence>
<evidence type="ECO:0000255" key="1">
    <source>
        <dbReference type="HAMAP-Rule" id="MF_00127"/>
    </source>
</evidence>
<organism>
    <name type="scientific">Staphylococcus epidermidis (strain ATCC 12228 / FDA PCI 1200)</name>
    <dbReference type="NCBI Taxonomy" id="176280"/>
    <lineage>
        <taxon>Bacteria</taxon>
        <taxon>Bacillati</taxon>
        <taxon>Bacillota</taxon>
        <taxon>Bacilli</taxon>
        <taxon>Bacillales</taxon>
        <taxon>Staphylococcaceae</taxon>
        <taxon>Staphylococcus</taxon>
    </lineage>
</organism>